<dbReference type="EMBL" id="X07234">
    <property type="protein sequence ID" value="CAA30220.1"/>
    <property type="molecule type" value="Genomic_DNA"/>
</dbReference>
<dbReference type="PIR" id="S03221">
    <property type="entry name" value="S03221"/>
</dbReference>
<dbReference type="RefSeq" id="NP_039787.1">
    <property type="nucleotide sequence ID" value="NC_001338.1"/>
</dbReference>
<dbReference type="PDB" id="2VQC">
    <property type="method" value="X-ray"/>
    <property type="resolution" value="2.30 A"/>
    <property type="chains" value="A=2-112"/>
</dbReference>
<dbReference type="PDBsum" id="2VQC"/>
<dbReference type="SMR" id="P20220"/>
<dbReference type="KEGG" id="vg:2559635"/>
<dbReference type="EvolutionaryTrace" id="P20220"/>
<dbReference type="Proteomes" id="UP000000854">
    <property type="component" value="Genome"/>
</dbReference>
<dbReference type="DisProt" id="DP00847"/>
<dbReference type="Gene3D" id="1.10.10.1470">
    <property type="entry name" value="F-112 protein-like"/>
    <property type="match status" value="1"/>
</dbReference>
<dbReference type="InterPro" id="IPR044877">
    <property type="entry name" value="F-112-like_sf"/>
</dbReference>
<dbReference type="InterPro" id="IPR018601">
    <property type="entry name" value="SSV1_F112-like"/>
</dbReference>
<dbReference type="InterPro" id="IPR036390">
    <property type="entry name" value="WH_DNA-bd_sf"/>
</dbReference>
<dbReference type="Pfam" id="PF09645">
    <property type="entry name" value="F-112"/>
    <property type="match status" value="1"/>
</dbReference>
<dbReference type="SUPFAM" id="SSF46785">
    <property type="entry name" value="Winged helix' DNA-binding domain"/>
    <property type="match status" value="1"/>
</dbReference>
<sequence>MAQTLNSYKMAEIMYKILEKKGELTLEDILAQFEISVPSAYNIQRALKAICERHPDECEVQYKNRKTTFKWIKQEQKEEQKQEQTQDNIAKIFDAQPANFEQTDQGFIKAKQ</sequence>
<organismHost>
    <name type="scientific">Saccharolobus solfataricus</name>
    <name type="common">Sulfolobus solfataricus</name>
    <dbReference type="NCBI Taxonomy" id="2287"/>
</organismHost>
<name>F112_SSV1</name>
<comment type="function">
    <text evidence="1">Essential for virus function.</text>
</comment>
<accession>P20220</accession>
<protein>
    <recommendedName>
        <fullName>Protein F-112</fullName>
    </recommendedName>
</protein>
<proteinExistence type="evidence at protein level"/>
<feature type="chain" id="PRO_0000223019" description="Protein F-112">
    <location>
        <begin position="1"/>
        <end position="112"/>
    </location>
</feature>
<feature type="helix" evidence="2">
    <location>
        <begin position="7"/>
        <end position="21"/>
    </location>
</feature>
<feature type="strand" evidence="2">
    <location>
        <begin position="22"/>
        <end position="24"/>
    </location>
</feature>
<feature type="helix" evidence="2">
    <location>
        <begin position="26"/>
        <end position="33"/>
    </location>
</feature>
<feature type="helix" evidence="2">
    <location>
        <begin position="37"/>
        <end position="53"/>
    </location>
</feature>
<feature type="turn" evidence="2">
    <location>
        <begin position="55"/>
        <end position="57"/>
    </location>
</feature>
<feature type="strand" evidence="2">
    <location>
        <begin position="58"/>
        <end position="62"/>
    </location>
</feature>
<feature type="strand" evidence="2">
    <location>
        <begin position="67"/>
        <end position="71"/>
    </location>
</feature>
<evidence type="ECO:0000269" key="1">
    <source>
    </source>
</evidence>
<evidence type="ECO:0007829" key="2">
    <source>
        <dbReference type="PDB" id="2VQC"/>
    </source>
</evidence>
<organism>
    <name type="scientific">Sulfolobus spindle-shape virus 1</name>
    <name type="common">SSV1</name>
    <dbReference type="NCBI Taxonomy" id="244589"/>
    <lineage>
        <taxon>Viruses</taxon>
        <taxon>Viruses incertae sedis</taxon>
        <taxon>Fuselloviridae</taxon>
        <taxon>Alphafusellovirus</taxon>
    </lineage>
</organism>
<reference key="1">
    <citation type="journal article" date="1991" name="Virology">
        <title>Complete nucleotide sequence of the virus SSV1 of the archaebacterium Sulfolobus shibatae.</title>
        <authorList>
            <person name="Palm P."/>
            <person name="Schleper C."/>
            <person name="Grampp B."/>
            <person name="Yeats S."/>
            <person name="McWilliam P."/>
            <person name="Reiter W.-D."/>
            <person name="Zillig W."/>
        </authorList>
    </citation>
    <scope>NUCLEOTIDE SEQUENCE [GENOMIC DNA]</scope>
</reference>
<reference key="2">
    <citation type="journal article" date="1999" name="Genetics">
        <title>Genetic requirements for the function of the archaeal virus SSV1 in Sulfolobus solfataricus: construction and testing of viral shuttle vectors.</title>
        <authorList>
            <person name="Stedman K.M."/>
            <person name="Schleper C."/>
            <person name="Rumpf E."/>
            <person name="Zillig W."/>
        </authorList>
    </citation>
    <scope>FUNCTION</scope>
</reference>
<reference key="3">
    <citation type="journal article" date="2008" name="Virology">
        <title>Cysteine usage in Sulfolobus spindle-shaped virus 1 and extension to hyperthermophilic viruses in general.</title>
        <authorList>
            <person name="Menon S.K."/>
            <person name="Maaty W.S."/>
            <person name="Corn G.J."/>
            <person name="Kwok S.C."/>
            <person name="Eilers B.J."/>
            <person name="Kraft P."/>
            <person name="Gillitzer E."/>
            <person name="Young M.J."/>
            <person name="Bothner B."/>
            <person name="Lawrence C.M."/>
        </authorList>
    </citation>
    <scope>X-RAY CRYSTALLOGRAPHY (2.3 ANGSTROMS) OF 2-112</scope>
</reference>
<keyword id="KW-0002">3D-structure</keyword>
<keyword id="KW-1185">Reference proteome</keyword>
<gene>
    <name type="ORF">f112</name>
</gene>